<evidence type="ECO:0000250" key="1">
    <source>
        <dbReference type="UniProtKB" id="Q15006"/>
    </source>
</evidence>
<evidence type="ECO:0000255" key="2"/>
<evidence type="ECO:0000305" key="3"/>
<accession>Q86K48</accession>
<accession>Q54ZX1</accession>
<proteinExistence type="inferred from homology"/>
<reference key="1">
    <citation type="journal article" date="2002" name="Nature">
        <title>Sequence and analysis of chromosome 2 of Dictyostelium discoideum.</title>
        <authorList>
            <person name="Gloeckner G."/>
            <person name="Eichinger L."/>
            <person name="Szafranski K."/>
            <person name="Pachebat J.A."/>
            <person name="Bankier A.T."/>
            <person name="Dear P.H."/>
            <person name="Lehmann R."/>
            <person name="Baumgart C."/>
            <person name="Parra G."/>
            <person name="Abril J.F."/>
            <person name="Guigo R."/>
            <person name="Kumpf K."/>
            <person name="Tunggal B."/>
            <person name="Cox E.C."/>
            <person name="Quail M.A."/>
            <person name="Platzer M."/>
            <person name="Rosenthal A."/>
            <person name="Noegel A.A."/>
        </authorList>
    </citation>
    <scope>NUCLEOTIDE SEQUENCE [LARGE SCALE GENOMIC DNA]</scope>
    <source>
        <strain>AX4</strain>
    </source>
</reference>
<reference key="2">
    <citation type="journal article" date="2005" name="Nature">
        <title>The genome of the social amoeba Dictyostelium discoideum.</title>
        <authorList>
            <person name="Eichinger L."/>
            <person name="Pachebat J.A."/>
            <person name="Gloeckner G."/>
            <person name="Rajandream M.A."/>
            <person name="Sucgang R."/>
            <person name="Berriman M."/>
            <person name="Song J."/>
            <person name="Olsen R."/>
            <person name="Szafranski K."/>
            <person name="Xu Q."/>
            <person name="Tunggal B."/>
            <person name="Kummerfeld S."/>
            <person name="Madera M."/>
            <person name="Konfortov B.A."/>
            <person name="Rivero F."/>
            <person name="Bankier A.T."/>
            <person name="Lehmann R."/>
            <person name="Hamlin N."/>
            <person name="Davies R."/>
            <person name="Gaudet P."/>
            <person name="Fey P."/>
            <person name="Pilcher K."/>
            <person name="Chen G."/>
            <person name="Saunders D."/>
            <person name="Sodergren E.J."/>
            <person name="Davis P."/>
            <person name="Kerhornou A."/>
            <person name="Nie X."/>
            <person name="Hall N."/>
            <person name="Anjard C."/>
            <person name="Hemphill L."/>
            <person name="Bason N."/>
            <person name="Farbrother P."/>
            <person name="Desany B."/>
            <person name="Just E."/>
            <person name="Morio T."/>
            <person name="Rost R."/>
            <person name="Churcher C.M."/>
            <person name="Cooper J."/>
            <person name="Haydock S."/>
            <person name="van Driessche N."/>
            <person name="Cronin A."/>
            <person name="Goodhead I."/>
            <person name="Muzny D.M."/>
            <person name="Mourier T."/>
            <person name="Pain A."/>
            <person name="Lu M."/>
            <person name="Harper D."/>
            <person name="Lindsay R."/>
            <person name="Hauser H."/>
            <person name="James K.D."/>
            <person name="Quiles M."/>
            <person name="Madan Babu M."/>
            <person name="Saito T."/>
            <person name="Buchrieser C."/>
            <person name="Wardroper A."/>
            <person name="Felder M."/>
            <person name="Thangavelu M."/>
            <person name="Johnson D."/>
            <person name="Knights A."/>
            <person name="Loulseged H."/>
            <person name="Mungall K.L."/>
            <person name="Oliver K."/>
            <person name="Price C."/>
            <person name="Quail M.A."/>
            <person name="Urushihara H."/>
            <person name="Hernandez J."/>
            <person name="Rabbinowitsch E."/>
            <person name="Steffen D."/>
            <person name="Sanders M."/>
            <person name="Ma J."/>
            <person name="Kohara Y."/>
            <person name="Sharp S."/>
            <person name="Simmonds M.N."/>
            <person name="Spiegler S."/>
            <person name="Tivey A."/>
            <person name="Sugano S."/>
            <person name="White B."/>
            <person name="Walker D."/>
            <person name="Woodward J.R."/>
            <person name="Winckler T."/>
            <person name="Tanaka Y."/>
            <person name="Shaulsky G."/>
            <person name="Schleicher M."/>
            <person name="Weinstock G.M."/>
            <person name="Rosenthal A."/>
            <person name="Cox E.C."/>
            <person name="Chisholm R.L."/>
            <person name="Gibbs R.A."/>
            <person name="Loomis W.F."/>
            <person name="Platzer M."/>
            <person name="Kay R.R."/>
            <person name="Williams J.G."/>
            <person name="Dear P.H."/>
            <person name="Noegel A.A."/>
            <person name="Barrell B.G."/>
            <person name="Kuspa A."/>
        </authorList>
    </citation>
    <scope>NUCLEOTIDE SEQUENCE [LARGE SCALE GENOMIC DNA]</scope>
    <source>
        <strain>AX4</strain>
    </source>
</reference>
<comment type="function">
    <text evidence="1">Part of the endoplasmic reticulum membrane protein complex (EMC) that enables the energy-independent insertion into endoplasmic reticulum membranes of newly synthesized membrane proteins. Preferentially accommodates proteins with transmembrane domains that are weakly hydrophobic or contain destabilizing features such as charged and aromatic residues. Involved in the cotranslational insertion of multi-pass membrane proteins in which stop-transfer membrane-anchor sequences become ER membrane spanning helices. It is also required for the post-translational insertion of tail-anchored/TA proteins in endoplasmic reticulum membranes. By mediating the proper cotranslational insertion of N-terminal transmembrane domains in an N-exo topology, with translocated N-terminus in the lumen of the ER, controls the topology of multi-pass membrane proteins. By regulating the insertion of various proteins in membranes, it is indirectly involved in many cellular processes.</text>
</comment>
<comment type="subunit">
    <text evidence="1">Component of the ER membrane protein complex (EMC).</text>
</comment>
<comment type="subcellular location">
    <subcellularLocation>
        <location evidence="1">Endoplasmic reticulum membrane</location>
        <topology evidence="1">Peripheral membrane protein</topology>
        <orientation evidence="1">Cytoplasmic side</orientation>
    </subcellularLocation>
</comment>
<comment type="similarity">
    <text evidence="3">Belongs to the EMC2 family.</text>
</comment>
<protein>
    <recommendedName>
        <fullName evidence="3">ER membrane protein complex subunit 2</fullName>
    </recommendedName>
    <alternativeName>
        <fullName>Tetratricopeptide repeat protein 35</fullName>
        <shortName>TPR repeat protein 35</shortName>
    </alternativeName>
</protein>
<sequence>MSEMLMLTSSDSIEINRYEEGIRNSGRSFNWVLVRDTLRFLRKSKIRKSNLVSKYGLKLVTQYFNKLEDQEGYDTIEQVIVACLDCGDHTNPKKLFEQLKSKFGKDSVRVQRIHALCLESNNQLAEALQIFESILKKYPSDALSMKRQVAIFKGQGNLSKAIQVLNAYLQIYMCDLEAWLELSSFHISYLSYSTALYCLEEVLLNAPINFVFYIKYAEPLYCLGGNENYNSAVQYYTHALELNSPTEMDKLDHPPTFLPAIYGIIMSIYSLCEEGYQLKESQLKLMEWAQNNLLTITKKYSSNDKINLVKHFIDSTDIFNKE</sequence>
<name>EMC2_DICDI</name>
<dbReference type="EMBL" id="AAFI02000019">
    <property type="protein sequence ID" value="EAL68760.1"/>
    <property type="molecule type" value="Genomic_DNA"/>
</dbReference>
<dbReference type="RefSeq" id="XP_642745.1">
    <property type="nucleotide sequence ID" value="XM_637653.1"/>
</dbReference>
<dbReference type="SMR" id="Q86K48"/>
<dbReference type="FunCoup" id="Q86K48">
    <property type="interactions" value="284"/>
</dbReference>
<dbReference type="STRING" id="44689.Q86K48"/>
<dbReference type="PaxDb" id="44689-DDB0169127"/>
<dbReference type="EnsemblProtists" id="EAL68760">
    <property type="protein sequence ID" value="EAL68760"/>
    <property type="gene ID" value="DDB_G0277149"/>
</dbReference>
<dbReference type="GeneID" id="8621222"/>
<dbReference type="KEGG" id="ddi:DDB_G0277149"/>
<dbReference type="dictyBase" id="DDB_G0277149"/>
<dbReference type="VEuPathDB" id="AmoebaDB:DDB_G0277149"/>
<dbReference type="eggNOG" id="KOG3060">
    <property type="taxonomic scope" value="Eukaryota"/>
</dbReference>
<dbReference type="HOGENOM" id="CLU_052388_1_0_1"/>
<dbReference type="InParanoid" id="Q86K48"/>
<dbReference type="OMA" id="MSDQEGW"/>
<dbReference type="PhylomeDB" id="Q86K48"/>
<dbReference type="PRO" id="PR:Q86K48"/>
<dbReference type="Proteomes" id="UP000002195">
    <property type="component" value="Chromosome 2"/>
</dbReference>
<dbReference type="GO" id="GO:0072546">
    <property type="term" value="C:EMC complex"/>
    <property type="evidence" value="ECO:0000318"/>
    <property type="project" value="GO_Central"/>
</dbReference>
<dbReference type="GO" id="GO:0005789">
    <property type="term" value="C:endoplasmic reticulum membrane"/>
    <property type="evidence" value="ECO:0000250"/>
    <property type="project" value="UniProtKB"/>
</dbReference>
<dbReference type="GO" id="GO:0042406">
    <property type="term" value="C:extrinsic component of endoplasmic reticulum membrane"/>
    <property type="evidence" value="ECO:0000250"/>
    <property type="project" value="UniProtKB"/>
</dbReference>
<dbReference type="GO" id="GO:0045050">
    <property type="term" value="P:protein insertion into ER membrane by stop-transfer membrane-anchor sequence"/>
    <property type="evidence" value="ECO:0000250"/>
    <property type="project" value="UniProtKB"/>
</dbReference>
<dbReference type="GO" id="GO:0071816">
    <property type="term" value="P:tail-anchored membrane protein insertion into ER membrane"/>
    <property type="evidence" value="ECO:0000250"/>
    <property type="project" value="UniProtKB"/>
</dbReference>
<dbReference type="FunFam" id="1.25.40.10:FF:001852">
    <property type="entry name" value="ER membrane protein complex subunit 2"/>
    <property type="match status" value="1"/>
</dbReference>
<dbReference type="Gene3D" id="1.25.40.10">
    <property type="entry name" value="Tetratricopeptide repeat domain"/>
    <property type="match status" value="1"/>
</dbReference>
<dbReference type="InterPro" id="IPR039856">
    <property type="entry name" value="EMC2-like"/>
</dbReference>
<dbReference type="InterPro" id="IPR011990">
    <property type="entry name" value="TPR-like_helical_dom_sf"/>
</dbReference>
<dbReference type="InterPro" id="IPR055217">
    <property type="entry name" value="TPR_EMC2"/>
</dbReference>
<dbReference type="PANTHER" id="PTHR12760">
    <property type="entry name" value="TETRATRICOPEPTIDE REPEAT PROTEIN"/>
    <property type="match status" value="1"/>
</dbReference>
<dbReference type="Pfam" id="PF22890">
    <property type="entry name" value="TPR_EMC2"/>
    <property type="match status" value="1"/>
</dbReference>
<dbReference type="SUPFAM" id="SSF48452">
    <property type="entry name" value="TPR-like"/>
    <property type="match status" value="1"/>
</dbReference>
<dbReference type="PROSITE" id="PS50293">
    <property type="entry name" value="TPR_REGION"/>
    <property type="match status" value="1"/>
</dbReference>
<feature type="chain" id="PRO_0000330652" description="ER membrane protein complex subunit 2">
    <location>
        <begin position="1"/>
        <end position="322"/>
    </location>
</feature>
<feature type="repeat" description="TPR 1" evidence="2">
    <location>
        <begin position="108"/>
        <end position="141"/>
    </location>
</feature>
<feature type="repeat" description="TPR 2" evidence="2">
    <location>
        <begin position="143"/>
        <end position="175"/>
    </location>
</feature>
<feature type="repeat" description="TPR 3" evidence="2">
    <location>
        <begin position="176"/>
        <end position="209"/>
    </location>
</feature>
<feature type="repeat" description="TPR 4" evidence="2">
    <location>
        <begin position="210"/>
        <end position="246"/>
    </location>
</feature>
<organism>
    <name type="scientific">Dictyostelium discoideum</name>
    <name type="common">Social amoeba</name>
    <dbReference type="NCBI Taxonomy" id="44689"/>
    <lineage>
        <taxon>Eukaryota</taxon>
        <taxon>Amoebozoa</taxon>
        <taxon>Evosea</taxon>
        <taxon>Eumycetozoa</taxon>
        <taxon>Dictyostelia</taxon>
        <taxon>Dictyosteliales</taxon>
        <taxon>Dictyosteliaceae</taxon>
        <taxon>Dictyostelium</taxon>
    </lineage>
</organism>
<gene>
    <name type="primary">emc2</name>
    <name type="synonym">ttc35</name>
    <name type="ORF">DDB_G0277149</name>
</gene>
<keyword id="KW-0256">Endoplasmic reticulum</keyword>
<keyword id="KW-0472">Membrane</keyword>
<keyword id="KW-1185">Reference proteome</keyword>
<keyword id="KW-0677">Repeat</keyword>
<keyword id="KW-0802">TPR repeat</keyword>